<reference key="1">
    <citation type="journal article" date="1995" name="J. Exp. Med.">
        <title>A recombinant Leishmania antigen that stimulates human peripheral blood mononuclear cells to express a Th1-type cytokine profile and to produce interleukin 12.</title>
        <authorList>
            <person name="Skeiky Y.A.W."/>
            <person name="Guderian J.A."/>
            <person name="Benson D.R."/>
            <person name="Bacelar O."/>
            <person name="Carvalho E.M."/>
            <person name="Kubin M."/>
            <person name="Badaro R."/>
            <person name="Trinchieri G."/>
            <person name="Reed S.G."/>
        </authorList>
    </citation>
    <scope>NUCLEOTIDE SEQUENCE [GENOMIC DNA]</scope>
    <source>
        <strain>MHOM/BR/75/M2903</strain>
    </source>
</reference>
<reference key="2">
    <citation type="journal article" date="2007" name="Nat. Genet.">
        <title>Comparative genomic analysis of three Leishmania species that cause diverse human disease.</title>
        <authorList>
            <person name="Peacock C.S."/>
            <person name="Seeger K."/>
            <person name="Harris D."/>
            <person name="Murphy L."/>
            <person name="Ruiz J.C."/>
            <person name="Quail M.A."/>
            <person name="Peters N."/>
            <person name="Adlem E."/>
            <person name="Tivey A."/>
            <person name="Aslett M."/>
            <person name="Kerhornou A."/>
            <person name="Ivens A."/>
            <person name="Fraser A."/>
            <person name="Rajandream M.-A."/>
            <person name="Carver T."/>
            <person name="Norbertczak H."/>
            <person name="Chillingworth T."/>
            <person name="Hance Z."/>
            <person name="Jagels K."/>
            <person name="Moule S."/>
            <person name="Ormond D."/>
            <person name="Rutter S."/>
            <person name="Sqaures R."/>
            <person name="Whitehead S."/>
            <person name="Rabbinowitsch E."/>
            <person name="Arrowsmith C."/>
            <person name="White B."/>
            <person name="Thurston S."/>
            <person name="Bringaud F."/>
            <person name="Baldauf S.L."/>
            <person name="Faulconbridge A."/>
            <person name="Jeffares D."/>
            <person name="Depledge D.P."/>
            <person name="Oyola S.O."/>
            <person name="Hilley J.D."/>
            <person name="Brito L.O."/>
            <person name="Tosi L.R.O."/>
            <person name="Barrell B."/>
            <person name="Cruz A.K."/>
            <person name="Mottram J.C."/>
            <person name="Smith D.F."/>
            <person name="Berriman M."/>
        </authorList>
    </citation>
    <scope>NUCLEOTIDE SEQUENCE [LARGE SCALE GENOMIC DNA]</scope>
    <source>
        <strain>MHOM/BR/75/M2904</strain>
    </source>
</reference>
<feature type="chain" id="PRO_0000054948" description="Probable eukaryotic initiation factor 4A">
    <location>
        <begin position="1"/>
        <end position="403"/>
    </location>
</feature>
<feature type="domain" description="Helicase ATP-binding" evidence="2">
    <location>
        <begin position="57"/>
        <end position="230"/>
    </location>
</feature>
<feature type="domain" description="Helicase C-terminal" evidence="3">
    <location>
        <begin position="241"/>
        <end position="401"/>
    </location>
</feature>
<feature type="region of interest" description="Disordered" evidence="4">
    <location>
        <begin position="1"/>
        <end position="29"/>
    </location>
</feature>
<feature type="short sequence motif" description="Q motif">
    <location>
        <begin position="26"/>
        <end position="54"/>
    </location>
</feature>
<feature type="short sequence motif" description="DEAD box">
    <location>
        <begin position="178"/>
        <end position="181"/>
    </location>
</feature>
<feature type="binding site" evidence="2">
    <location>
        <begin position="70"/>
        <end position="77"/>
    </location>
    <ligand>
        <name>ATP</name>
        <dbReference type="ChEBI" id="CHEBI:30616"/>
    </ligand>
</feature>
<feature type="sequence conflict" description="In Ref. 1; AAA80219." evidence="5" ref="1">
    <original>R</original>
    <variation>V</variation>
    <location>
        <position position="363"/>
    </location>
</feature>
<gene>
    <name type="ORF">LbrM01_V2.0740</name>
    <name type="ORF">LbrM_01_0740</name>
</gene>
<sequence length="403" mass="45327">MSQQDRVAPQDQDSFLDDQPGVRPIPSFDDMPLHQNLLRGIYSYGFEKPSSIQQRAIAPFTRGGDIIAQAQSGTGKTGAFSIGLLQRLDFRHNLIQGLVLSPTRELALQTAEVISRIGEFLSNSAKFCETFVGGTRVQDDLRKLQAGVVVAVGTPGRVSDVIKRGALRTESLRVLVLDEADEMLSQGFADQIYEIFRFLPKDIQVALFSATMPEEVLELTKKFMRDPVRILVKRESLTLEGIKQFFIAVEEEHKLDTLMDLYETVSIAQSVIFANTRRKVDWIAEKLNQSNHTVSSMHAEMPKSDRERVMNTFRSGSSRVLVTTDLVARGIDVHHVNIVINFDLPTNKENYLHRIGRGGRYGRKGVAINFVTEKDVELLHEIEGHYHTQIDELPVDFAAYLGE</sequence>
<protein>
    <recommendedName>
        <fullName>Probable eukaryotic initiation factor 4A</fullName>
        <shortName>eIF-4A</shortName>
        <ecNumber>3.6.4.13</ecNumber>
    </recommendedName>
    <alternativeName>
        <fullName>ATP-dependent RNA helicase eIF4A</fullName>
    </alternativeName>
</protein>
<accession>Q25225</accession>
<accession>A4H393</accession>
<evidence type="ECO:0000250" key="1"/>
<evidence type="ECO:0000255" key="2">
    <source>
        <dbReference type="PROSITE-ProRule" id="PRU00541"/>
    </source>
</evidence>
<evidence type="ECO:0000255" key="3">
    <source>
        <dbReference type="PROSITE-ProRule" id="PRU00542"/>
    </source>
</evidence>
<evidence type="ECO:0000256" key="4">
    <source>
        <dbReference type="SAM" id="MobiDB-lite"/>
    </source>
</evidence>
<evidence type="ECO:0000305" key="5"/>
<comment type="function">
    <text evidence="1">ATP-dependent RNA helicase which is a subunit of the eIF4F complex involved in cap recognition and is required for mRNA binding to ribosome. In the current model of translation initiation, eIF4A unwinds RNA secondary structures in the 5'-UTR of mRNAs which is necessary to allow efficient binding of the small ribosomal subunit, and subsequent scanning for the initiator codon (By similarity).</text>
</comment>
<comment type="catalytic activity">
    <reaction>
        <text>ATP + H2O = ADP + phosphate + H(+)</text>
        <dbReference type="Rhea" id="RHEA:13065"/>
        <dbReference type="ChEBI" id="CHEBI:15377"/>
        <dbReference type="ChEBI" id="CHEBI:15378"/>
        <dbReference type="ChEBI" id="CHEBI:30616"/>
        <dbReference type="ChEBI" id="CHEBI:43474"/>
        <dbReference type="ChEBI" id="CHEBI:456216"/>
        <dbReference type="EC" id="3.6.4.13"/>
    </reaction>
</comment>
<comment type="subunit">
    <text evidence="1">eIF4F is a multi-subunit complex, the composition of which varies with external and internal environmental conditions. It is composed of at least EIF4A, EIF4E and EIF4G (By similarity).</text>
</comment>
<comment type="similarity">
    <text evidence="5">Belongs to the DEAD box helicase family. eIF4A subfamily.</text>
</comment>
<keyword id="KW-0067">ATP-binding</keyword>
<keyword id="KW-0347">Helicase</keyword>
<keyword id="KW-0378">Hydrolase</keyword>
<keyword id="KW-0396">Initiation factor</keyword>
<keyword id="KW-0547">Nucleotide-binding</keyword>
<keyword id="KW-0648">Protein biosynthesis</keyword>
<keyword id="KW-1185">Reference proteome</keyword>
<keyword id="KW-0694">RNA-binding</keyword>
<dbReference type="EC" id="3.6.4.13"/>
<dbReference type="EMBL" id="U19888">
    <property type="protein sequence ID" value="AAA80219.1"/>
    <property type="molecule type" value="Genomic_DNA"/>
</dbReference>
<dbReference type="EMBL" id="FR798975">
    <property type="protein sequence ID" value="CAM36502.1"/>
    <property type="molecule type" value="Genomic_DNA"/>
</dbReference>
<dbReference type="RefSeq" id="XP_001561513.1">
    <property type="nucleotide sequence ID" value="XM_001561463.1"/>
</dbReference>
<dbReference type="SMR" id="Q25225"/>
<dbReference type="FunCoup" id="Q25225">
    <property type="interactions" value="377"/>
</dbReference>
<dbReference type="STRING" id="5660.Q25225"/>
<dbReference type="GeneID" id="5412356"/>
<dbReference type="KEGG" id="lbz:LBRM_01_0740"/>
<dbReference type="VEuPathDB" id="TriTrypDB:LbrM.01.0740"/>
<dbReference type="InParanoid" id="Q25225"/>
<dbReference type="OMA" id="FGCQALV"/>
<dbReference type="Proteomes" id="UP000007258">
    <property type="component" value="Chromosome 1"/>
</dbReference>
<dbReference type="GO" id="GO:0005829">
    <property type="term" value="C:cytosol"/>
    <property type="evidence" value="ECO:0007669"/>
    <property type="project" value="TreeGrafter"/>
</dbReference>
<dbReference type="GO" id="GO:0005524">
    <property type="term" value="F:ATP binding"/>
    <property type="evidence" value="ECO:0007669"/>
    <property type="project" value="UniProtKB-KW"/>
</dbReference>
<dbReference type="GO" id="GO:0016887">
    <property type="term" value="F:ATP hydrolysis activity"/>
    <property type="evidence" value="ECO:0007669"/>
    <property type="project" value="RHEA"/>
</dbReference>
<dbReference type="GO" id="GO:0003723">
    <property type="term" value="F:RNA binding"/>
    <property type="evidence" value="ECO:0007669"/>
    <property type="project" value="UniProtKB-KW"/>
</dbReference>
<dbReference type="GO" id="GO:0003724">
    <property type="term" value="F:RNA helicase activity"/>
    <property type="evidence" value="ECO:0007669"/>
    <property type="project" value="UniProtKB-EC"/>
</dbReference>
<dbReference type="GO" id="GO:0003743">
    <property type="term" value="F:translation initiation factor activity"/>
    <property type="evidence" value="ECO:0007669"/>
    <property type="project" value="UniProtKB-KW"/>
</dbReference>
<dbReference type="CDD" id="cd17939">
    <property type="entry name" value="DEADc_EIF4A"/>
    <property type="match status" value="1"/>
</dbReference>
<dbReference type="CDD" id="cd18787">
    <property type="entry name" value="SF2_C_DEAD"/>
    <property type="match status" value="1"/>
</dbReference>
<dbReference type="FunFam" id="3.40.50.300:FF:000849">
    <property type="entry name" value="ATP-dependent RNA helicase DBP5"/>
    <property type="match status" value="1"/>
</dbReference>
<dbReference type="FunFam" id="3.40.50.300:FF:000031">
    <property type="entry name" value="Eukaryotic initiation factor 4A-III"/>
    <property type="match status" value="1"/>
</dbReference>
<dbReference type="Gene3D" id="3.40.50.300">
    <property type="entry name" value="P-loop containing nucleotide triphosphate hydrolases"/>
    <property type="match status" value="2"/>
</dbReference>
<dbReference type="InterPro" id="IPR011545">
    <property type="entry name" value="DEAD/DEAH_box_helicase_dom"/>
</dbReference>
<dbReference type="InterPro" id="IPR050079">
    <property type="entry name" value="DEAD_box_RNA_helicase"/>
</dbReference>
<dbReference type="InterPro" id="IPR014001">
    <property type="entry name" value="Helicase_ATP-bd"/>
</dbReference>
<dbReference type="InterPro" id="IPR001650">
    <property type="entry name" value="Helicase_C-like"/>
</dbReference>
<dbReference type="InterPro" id="IPR027417">
    <property type="entry name" value="P-loop_NTPase"/>
</dbReference>
<dbReference type="InterPro" id="IPR000629">
    <property type="entry name" value="RNA-helicase_DEAD-box_CS"/>
</dbReference>
<dbReference type="InterPro" id="IPR014014">
    <property type="entry name" value="RNA_helicase_DEAD_Q_motif"/>
</dbReference>
<dbReference type="PANTHER" id="PTHR47959:SF1">
    <property type="entry name" value="ATP-DEPENDENT RNA HELICASE DBPA"/>
    <property type="match status" value="1"/>
</dbReference>
<dbReference type="PANTHER" id="PTHR47959">
    <property type="entry name" value="ATP-DEPENDENT RNA HELICASE RHLE-RELATED"/>
    <property type="match status" value="1"/>
</dbReference>
<dbReference type="Pfam" id="PF00270">
    <property type="entry name" value="DEAD"/>
    <property type="match status" value="1"/>
</dbReference>
<dbReference type="Pfam" id="PF00271">
    <property type="entry name" value="Helicase_C"/>
    <property type="match status" value="1"/>
</dbReference>
<dbReference type="SMART" id="SM00487">
    <property type="entry name" value="DEXDc"/>
    <property type="match status" value="1"/>
</dbReference>
<dbReference type="SMART" id="SM00490">
    <property type="entry name" value="HELICc"/>
    <property type="match status" value="1"/>
</dbReference>
<dbReference type="SUPFAM" id="SSF52540">
    <property type="entry name" value="P-loop containing nucleoside triphosphate hydrolases"/>
    <property type="match status" value="1"/>
</dbReference>
<dbReference type="PROSITE" id="PS00039">
    <property type="entry name" value="DEAD_ATP_HELICASE"/>
    <property type="match status" value="1"/>
</dbReference>
<dbReference type="PROSITE" id="PS51192">
    <property type="entry name" value="HELICASE_ATP_BIND_1"/>
    <property type="match status" value="1"/>
</dbReference>
<dbReference type="PROSITE" id="PS51194">
    <property type="entry name" value="HELICASE_CTER"/>
    <property type="match status" value="1"/>
</dbReference>
<dbReference type="PROSITE" id="PS51195">
    <property type="entry name" value="Q_MOTIF"/>
    <property type="match status" value="1"/>
</dbReference>
<organism>
    <name type="scientific">Leishmania braziliensis</name>
    <dbReference type="NCBI Taxonomy" id="5660"/>
    <lineage>
        <taxon>Eukaryota</taxon>
        <taxon>Discoba</taxon>
        <taxon>Euglenozoa</taxon>
        <taxon>Kinetoplastea</taxon>
        <taxon>Metakinetoplastina</taxon>
        <taxon>Trypanosomatida</taxon>
        <taxon>Trypanosomatidae</taxon>
        <taxon>Leishmaniinae</taxon>
        <taxon>Leishmania</taxon>
        <taxon>Leishmania braziliensis species complex</taxon>
    </lineage>
</organism>
<proteinExistence type="inferred from homology"/>
<name>IF4A_LEIBR</name>